<comment type="function">
    <text evidence="1">Methyltransferase required for the conversion of demethylmenaquinol (DMKH2) to menaquinol (MKH2) and the conversion of 2-polyprenyl-6-methoxy-1,4-benzoquinol (DDMQH2) to 2-polyprenyl-3-methyl-6-methoxy-1,4-benzoquinol (DMQH2).</text>
</comment>
<comment type="catalytic activity">
    <reaction evidence="1">
        <text>a 2-demethylmenaquinol + S-adenosyl-L-methionine = a menaquinol + S-adenosyl-L-homocysteine + H(+)</text>
        <dbReference type="Rhea" id="RHEA:42640"/>
        <dbReference type="Rhea" id="RHEA-COMP:9539"/>
        <dbReference type="Rhea" id="RHEA-COMP:9563"/>
        <dbReference type="ChEBI" id="CHEBI:15378"/>
        <dbReference type="ChEBI" id="CHEBI:18151"/>
        <dbReference type="ChEBI" id="CHEBI:55437"/>
        <dbReference type="ChEBI" id="CHEBI:57856"/>
        <dbReference type="ChEBI" id="CHEBI:59789"/>
        <dbReference type="EC" id="2.1.1.163"/>
    </reaction>
</comment>
<comment type="catalytic activity">
    <reaction evidence="1">
        <text>a 2-methoxy-6-(all-trans-polyprenyl)benzene-1,4-diol + S-adenosyl-L-methionine = a 5-methoxy-2-methyl-3-(all-trans-polyprenyl)benzene-1,4-diol + S-adenosyl-L-homocysteine + H(+)</text>
        <dbReference type="Rhea" id="RHEA:28286"/>
        <dbReference type="Rhea" id="RHEA-COMP:10858"/>
        <dbReference type="Rhea" id="RHEA-COMP:10859"/>
        <dbReference type="ChEBI" id="CHEBI:15378"/>
        <dbReference type="ChEBI" id="CHEBI:57856"/>
        <dbReference type="ChEBI" id="CHEBI:59789"/>
        <dbReference type="ChEBI" id="CHEBI:84166"/>
        <dbReference type="ChEBI" id="CHEBI:84167"/>
        <dbReference type="EC" id="2.1.1.201"/>
    </reaction>
</comment>
<comment type="pathway">
    <text evidence="1">Quinol/quinone metabolism; menaquinone biosynthesis; menaquinol from 1,4-dihydroxy-2-naphthoate: step 2/2.</text>
</comment>
<comment type="pathway">
    <text evidence="1">Cofactor biosynthesis; ubiquinone biosynthesis.</text>
</comment>
<comment type="similarity">
    <text evidence="1">Belongs to the class I-like SAM-binding methyltransferase superfamily. MenG/UbiE family.</text>
</comment>
<gene>
    <name evidence="1" type="primary">ubiE</name>
    <name type="ordered locus">CKO_00176</name>
</gene>
<sequence length="251" mass="28087">MVEDSQETTHFGFQTVAKEQKADMVAHVFHSVASKYDVMNDLMSFGIHRLWKRFTIDCSGVRRGQTVLDLAGGTGDLTAKFSRLVGETGNVILADINDSMLKMGREKLRNIGVIGNVKYVQANAEALPFPDNTFDCITISFGLRNVTEKEKALRSMYRVLKPGGRLLVLEFSKPIIEPLSKAYDAYSFHILPRIGSVVANDADSYRYLAESIRMHPDQDTLKAMMQDAGFESVDYYNLTAGVVALHRGYKF</sequence>
<feature type="chain" id="PRO_1000056242" description="Ubiquinone/menaquinone biosynthesis C-methyltransferase UbiE">
    <location>
        <begin position="1"/>
        <end position="251"/>
    </location>
</feature>
<feature type="binding site" evidence="1">
    <location>
        <position position="74"/>
    </location>
    <ligand>
        <name>S-adenosyl-L-methionine</name>
        <dbReference type="ChEBI" id="CHEBI:59789"/>
    </ligand>
</feature>
<feature type="binding site" evidence="1">
    <location>
        <position position="95"/>
    </location>
    <ligand>
        <name>S-adenosyl-L-methionine</name>
        <dbReference type="ChEBI" id="CHEBI:59789"/>
    </ligand>
</feature>
<feature type="binding site" evidence="1">
    <location>
        <begin position="123"/>
        <end position="124"/>
    </location>
    <ligand>
        <name>S-adenosyl-L-methionine</name>
        <dbReference type="ChEBI" id="CHEBI:59789"/>
    </ligand>
</feature>
<feature type="binding site" evidence="1">
    <location>
        <position position="140"/>
    </location>
    <ligand>
        <name>S-adenosyl-L-methionine</name>
        <dbReference type="ChEBI" id="CHEBI:59789"/>
    </ligand>
</feature>
<name>UBIE_CITK8</name>
<reference key="1">
    <citation type="submission" date="2007-08" db="EMBL/GenBank/DDBJ databases">
        <authorList>
            <consortium name="The Citrobacter koseri Genome Sequencing Project"/>
            <person name="McClelland M."/>
            <person name="Sanderson E.K."/>
            <person name="Porwollik S."/>
            <person name="Spieth J."/>
            <person name="Clifton W.S."/>
            <person name="Latreille P."/>
            <person name="Courtney L."/>
            <person name="Wang C."/>
            <person name="Pepin K."/>
            <person name="Bhonagiri V."/>
            <person name="Nash W."/>
            <person name="Johnson M."/>
            <person name="Thiruvilangam P."/>
            <person name="Wilson R."/>
        </authorList>
    </citation>
    <scope>NUCLEOTIDE SEQUENCE [LARGE SCALE GENOMIC DNA]</scope>
    <source>
        <strain>ATCC BAA-895 / CDC 4225-83 / SGSC4696</strain>
    </source>
</reference>
<accession>A8ACY2</accession>
<proteinExistence type="inferred from homology"/>
<keyword id="KW-0474">Menaquinone biosynthesis</keyword>
<keyword id="KW-0489">Methyltransferase</keyword>
<keyword id="KW-1185">Reference proteome</keyword>
<keyword id="KW-0949">S-adenosyl-L-methionine</keyword>
<keyword id="KW-0808">Transferase</keyword>
<keyword id="KW-0831">Ubiquinone biosynthesis</keyword>
<evidence type="ECO:0000255" key="1">
    <source>
        <dbReference type="HAMAP-Rule" id="MF_01813"/>
    </source>
</evidence>
<organism>
    <name type="scientific">Citrobacter koseri (strain ATCC BAA-895 / CDC 4225-83 / SGSC4696)</name>
    <dbReference type="NCBI Taxonomy" id="290338"/>
    <lineage>
        <taxon>Bacteria</taxon>
        <taxon>Pseudomonadati</taxon>
        <taxon>Pseudomonadota</taxon>
        <taxon>Gammaproteobacteria</taxon>
        <taxon>Enterobacterales</taxon>
        <taxon>Enterobacteriaceae</taxon>
        <taxon>Citrobacter</taxon>
    </lineage>
</organism>
<protein>
    <recommendedName>
        <fullName evidence="1">Ubiquinone/menaquinone biosynthesis C-methyltransferase UbiE</fullName>
        <ecNumber evidence="1">2.1.1.163</ecNumber>
        <ecNumber evidence="1">2.1.1.201</ecNumber>
    </recommendedName>
    <alternativeName>
        <fullName evidence="1">2-methoxy-6-polyprenyl-1,4-benzoquinol methylase</fullName>
    </alternativeName>
    <alternativeName>
        <fullName evidence="1">Demethylmenaquinone methyltransferase</fullName>
    </alternativeName>
</protein>
<dbReference type="EC" id="2.1.1.163" evidence="1"/>
<dbReference type="EC" id="2.1.1.201" evidence="1"/>
<dbReference type="EMBL" id="CP000822">
    <property type="protein sequence ID" value="ABV11345.1"/>
    <property type="molecule type" value="Genomic_DNA"/>
</dbReference>
<dbReference type="RefSeq" id="WP_012131179.1">
    <property type="nucleotide sequence ID" value="NC_009792.1"/>
</dbReference>
<dbReference type="SMR" id="A8ACY2"/>
<dbReference type="STRING" id="290338.CKO_00176"/>
<dbReference type="GeneID" id="45134467"/>
<dbReference type="KEGG" id="cko:CKO_00176"/>
<dbReference type="HOGENOM" id="CLU_037990_0_0_6"/>
<dbReference type="OrthoDB" id="9808140at2"/>
<dbReference type="UniPathway" id="UPA00079">
    <property type="reaction ID" value="UER00169"/>
</dbReference>
<dbReference type="UniPathway" id="UPA00232"/>
<dbReference type="Proteomes" id="UP000008148">
    <property type="component" value="Chromosome"/>
</dbReference>
<dbReference type="GO" id="GO:0008425">
    <property type="term" value="F:2-methoxy-6-polyprenyl-1,4-benzoquinol methyltransferase activity"/>
    <property type="evidence" value="ECO:0007669"/>
    <property type="project" value="UniProtKB-UniRule"/>
</dbReference>
<dbReference type="GO" id="GO:0043770">
    <property type="term" value="F:demethylmenaquinone methyltransferase activity"/>
    <property type="evidence" value="ECO:0007669"/>
    <property type="project" value="UniProtKB-UniRule"/>
</dbReference>
<dbReference type="GO" id="GO:0009060">
    <property type="term" value="P:aerobic respiration"/>
    <property type="evidence" value="ECO:0007669"/>
    <property type="project" value="UniProtKB-UniRule"/>
</dbReference>
<dbReference type="GO" id="GO:0009234">
    <property type="term" value="P:menaquinone biosynthetic process"/>
    <property type="evidence" value="ECO:0007669"/>
    <property type="project" value="UniProtKB-UniRule"/>
</dbReference>
<dbReference type="GO" id="GO:0032259">
    <property type="term" value="P:methylation"/>
    <property type="evidence" value="ECO:0007669"/>
    <property type="project" value="UniProtKB-KW"/>
</dbReference>
<dbReference type="CDD" id="cd02440">
    <property type="entry name" value="AdoMet_MTases"/>
    <property type="match status" value="1"/>
</dbReference>
<dbReference type="FunFam" id="3.40.50.150:FF:000014">
    <property type="entry name" value="Ubiquinone/menaquinone biosynthesis C-methyltransferase UbiE"/>
    <property type="match status" value="1"/>
</dbReference>
<dbReference type="Gene3D" id="3.40.50.150">
    <property type="entry name" value="Vaccinia Virus protein VP39"/>
    <property type="match status" value="1"/>
</dbReference>
<dbReference type="HAMAP" id="MF_01813">
    <property type="entry name" value="MenG_UbiE_methyltr"/>
    <property type="match status" value="1"/>
</dbReference>
<dbReference type="InterPro" id="IPR029063">
    <property type="entry name" value="SAM-dependent_MTases_sf"/>
</dbReference>
<dbReference type="InterPro" id="IPR004033">
    <property type="entry name" value="UbiE/COQ5_MeTrFase"/>
</dbReference>
<dbReference type="InterPro" id="IPR023576">
    <property type="entry name" value="UbiE/COQ5_MeTrFase_CS"/>
</dbReference>
<dbReference type="NCBIfam" id="TIGR01934">
    <property type="entry name" value="MenG_MenH_UbiE"/>
    <property type="match status" value="1"/>
</dbReference>
<dbReference type="NCBIfam" id="NF001240">
    <property type="entry name" value="PRK00216.1-1"/>
    <property type="match status" value="1"/>
</dbReference>
<dbReference type="NCBIfam" id="NF001242">
    <property type="entry name" value="PRK00216.1-3"/>
    <property type="match status" value="1"/>
</dbReference>
<dbReference type="NCBIfam" id="NF001244">
    <property type="entry name" value="PRK00216.1-5"/>
    <property type="match status" value="1"/>
</dbReference>
<dbReference type="PANTHER" id="PTHR43591:SF24">
    <property type="entry name" value="2-METHOXY-6-POLYPRENYL-1,4-BENZOQUINOL METHYLASE, MITOCHONDRIAL"/>
    <property type="match status" value="1"/>
</dbReference>
<dbReference type="PANTHER" id="PTHR43591">
    <property type="entry name" value="METHYLTRANSFERASE"/>
    <property type="match status" value="1"/>
</dbReference>
<dbReference type="Pfam" id="PF01209">
    <property type="entry name" value="Ubie_methyltran"/>
    <property type="match status" value="1"/>
</dbReference>
<dbReference type="SUPFAM" id="SSF53335">
    <property type="entry name" value="S-adenosyl-L-methionine-dependent methyltransferases"/>
    <property type="match status" value="1"/>
</dbReference>
<dbReference type="PROSITE" id="PS51608">
    <property type="entry name" value="SAM_MT_UBIE"/>
    <property type="match status" value="1"/>
</dbReference>
<dbReference type="PROSITE" id="PS01183">
    <property type="entry name" value="UBIE_1"/>
    <property type="match status" value="1"/>
</dbReference>
<dbReference type="PROSITE" id="PS01184">
    <property type="entry name" value="UBIE_2"/>
    <property type="match status" value="1"/>
</dbReference>